<evidence type="ECO:0000255" key="1">
    <source>
        <dbReference type="HAMAP-Rule" id="MF_00436"/>
    </source>
</evidence>
<evidence type="ECO:0000255" key="2">
    <source>
        <dbReference type="PROSITE-ProRule" id="PRU01346"/>
    </source>
</evidence>
<reference key="1">
    <citation type="submission" date="2009-02" db="EMBL/GenBank/DDBJ databases">
        <title>Genome sequence of Bacillus cereus 03BB102.</title>
        <authorList>
            <person name="Dodson R.J."/>
            <person name="Jackson P."/>
            <person name="Munk A.C."/>
            <person name="Brettin T."/>
            <person name="Bruce D."/>
            <person name="Detter C."/>
            <person name="Tapia R."/>
            <person name="Han C."/>
            <person name="Sutton G."/>
            <person name="Sims D."/>
        </authorList>
    </citation>
    <scope>NUCLEOTIDE SEQUENCE [LARGE SCALE GENOMIC DNA]</scope>
    <source>
        <strain>03BB102</strain>
    </source>
</reference>
<comment type="function">
    <text evidence="1">RNA chaperone that binds small regulatory RNA (sRNAs) and mRNAs to facilitate mRNA translational regulation in response to envelope stress, environmental stress and changes in metabolite concentrations. Also binds with high specificity to tRNAs.</text>
</comment>
<comment type="subunit">
    <text evidence="1">Homohexamer.</text>
</comment>
<comment type="similarity">
    <text evidence="1">Belongs to the Hfq family.</text>
</comment>
<keyword id="KW-0694">RNA-binding</keyword>
<keyword id="KW-0346">Stress response</keyword>
<protein>
    <recommendedName>
        <fullName evidence="1">RNA-binding protein Hfq</fullName>
    </recommendedName>
</protein>
<accession>C1ENE6</accession>
<name>HFQ_BACC3</name>
<sequence length="74" mass="8646">MKQSINIQDQFLNQLRKENTFVTLYLLNGFQLRGLIKGFDNFTVLLETEGKQQLIYKHAISTFVPQKNVSIELE</sequence>
<organism>
    <name type="scientific">Bacillus cereus (strain 03BB102)</name>
    <dbReference type="NCBI Taxonomy" id="572264"/>
    <lineage>
        <taxon>Bacteria</taxon>
        <taxon>Bacillati</taxon>
        <taxon>Bacillota</taxon>
        <taxon>Bacilli</taxon>
        <taxon>Bacillales</taxon>
        <taxon>Bacillaceae</taxon>
        <taxon>Bacillus</taxon>
        <taxon>Bacillus cereus group</taxon>
    </lineage>
</organism>
<proteinExistence type="inferred from homology"/>
<feature type="chain" id="PRO_1000135019" description="RNA-binding protein Hfq">
    <location>
        <begin position="1"/>
        <end position="74"/>
    </location>
</feature>
<feature type="domain" description="Sm" evidence="2">
    <location>
        <begin position="9"/>
        <end position="69"/>
    </location>
</feature>
<gene>
    <name evidence="1" type="primary">hfq</name>
    <name type="ordered locus">BCA_3803</name>
</gene>
<dbReference type="EMBL" id="CP001407">
    <property type="protein sequence ID" value="ACO28766.1"/>
    <property type="molecule type" value="Genomic_DNA"/>
</dbReference>
<dbReference type="RefSeq" id="WP_000813896.1">
    <property type="nucleotide sequence ID" value="NZ_CP009318.1"/>
</dbReference>
<dbReference type="SMR" id="C1ENE6"/>
<dbReference type="GeneID" id="93007416"/>
<dbReference type="KEGG" id="bcx:BCA_3803"/>
<dbReference type="PATRIC" id="fig|572264.18.peg.3760"/>
<dbReference type="Proteomes" id="UP000002210">
    <property type="component" value="Chromosome"/>
</dbReference>
<dbReference type="GO" id="GO:0005829">
    <property type="term" value="C:cytosol"/>
    <property type="evidence" value="ECO:0007669"/>
    <property type="project" value="TreeGrafter"/>
</dbReference>
<dbReference type="GO" id="GO:0003723">
    <property type="term" value="F:RNA binding"/>
    <property type="evidence" value="ECO:0007669"/>
    <property type="project" value="UniProtKB-UniRule"/>
</dbReference>
<dbReference type="GO" id="GO:0006355">
    <property type="term" value="P:regulation of DNA-templated transcription"/>
    <property type="evidence" value="ECO:0007669"/>
    <property type="project" value="InterPro"/>
</dbReference>
<dbReference type="GO" id="GO:0043487">
    <property type="term" value="P:regulation of RNA stability"/>
    <property type="evidence" value="ECO:0007669"/>
    <property type="project" value="TreeGrafter"/>
</dbReference>
<dbReference type="GO" id="GO:0045974">
    <property type="term" value="P:regulation of translation, ncRNA-mediated"/>
    <property type="evidence" value="ECO:0007669"/>
    <property type="project" value="TreeGrafter"/>
</dbReference>
<dbReference type="CDD" id="cd01716">
    <property type="entry name" value="Hfq"/>
    <property type="match status" value="1"/>
</dbReference>
<dbReference type="FunFam" id="2.30.30.100:FF:000012">
    <property type="entry name" value="RNA-binding protein Hfq"/>
    <property type="match status" value="1"/>
</dbReference>
<dbReference type="Gene3D" id="2.30.30.100">
    <property type="match status" value="1"/>
</dbReference>
<dbReference type="HAMAP" id="MF_00436">
    <property type="entry name" value="Hfq"/>
    <property type="match status" value="1"/>
</dbReference>
<dbReference type="InterPro" id="IPR005001">
    <property type="entry name" value="Hfq"/>
</dbReference>
<dbReference type="InterPro" id="IPR010920">
    <property type="entry name" value="LSM_dom_sf"/>
</dbReference>
<dbReference type="InterPro" id="IPR047575">
    <property type="entry name" value="Sm"/>
</dbReference>
<dbReference type="NCBIfam" id="TIGR02383">
    <property type="entry name" value="Hfq"/>
    <property type="match status" value="1"/>
</dbReference>
<dbReference type="NCBIfam" id="NF001602">
    <property type="entry name" value="PRK00395.1"/>
    <property type="match status" value="1"/>
</dbReference>
<dbReference type="PANTHER" id="PTHR34772">
    <property type="entry name" value="RNA-BINDING PROTEIN HFQ"/>
    <property type="match status" value="1"/>
</dbReference>
<dbReference type="PANTHER" id="PTHR34772:SF1">
    <property type="entry name" value="RNA-BINDING PROTEIN HFQ"/>
    <property type="match status" value="1"/>
</dbReference>
<dbReference type="Pfam" id="PF17209">
    <property type="entry name" value="Hfq"/>
    <property type="match status" value="1"/>
</dbReference>
<dbReference type="SUPFAM" id="SSF50182">
    <property type="entry name" value="Sm-like ribonucleoproteins"/>
    <property type="match status" value="1"/>
</dbReference>
<dbReference type="PROSITE" id="PS52002">
    <property type="entry name" value="SM"/>
    <property type="match status" value="1"/>
</dbReference>